<accession>P15262</accession>
<organism>
    <name type="scientific">Lytechinus variegatus</name>
    <name type="common">Green sea urchin</name>
    <name type="synonym">Echinus variegatus</name>
    <dbReference type="NCBI Taxonomy" id="7654"/>
    <lineage>
        <taxon>Eukaryota</taxon>
        <taxon>Metazoa</taxon>
        <taxon>Echinodermata</taxon>
        <taxon>Eleutherozoa</taxon>
        <taxon>Echinozoa</taxon>
        <taxon>Echinoidea</taxon>
        <taxon>Euechinoidea</taxon>
        <taxon>Echinacea</taxon>
        <taxon>Temnopleuroida</taxon>
        <taxon>Toxopneustidae</taxon>
        <taxon>Lytechinus</taxon>
    </lineage>
</organism>
<reference key="1">
    <citation type="journal article" date="1989" name="Dev. Biol.">
        <title>Gastrulation in the sea urchin is accompanied by the accumulation of an endoderm-specific mRNA.</title>
        <authorList>
            <person name="Wessel G.M."/>
            <person name="Goldberg L."/>
            <person name="Lennarz W.J."/>
            <person name="Klein W.H."/>
        </authorList>
    </citation>
    <scope>NUCLEOTIDE SEQUENCE [MRNA]</scope>
</reference>
<comment type="tissue specificity">
    <text>Endoderm cells.</text>
</comment>
<comment type="developmental stage">
    <text>Gastrulation, endoderm-specific protein.</text>
</comment>
<proteinExistence type="evidence at transcript level"/>
<name>LVN1_LYTVA</name>
<sequence length="189" mass="21790">MSTVAWDFAERRLGLNLDILYPNGTAYNFRVIQDYTTGTQFTIFERYRFCAKQKAPMPEPENCIPGNTSVRFRGFLGAGKDRIDYDLYTMKLTKEETGNLEGEGTFSVVRGTEYDIPLSNSFIGTYFDGETPYAQVSNGGYYNIEIGIDDPKRWFDVPDYCPKELTDLTMIPKHIPKWTWIRLPAPRLF</sequence>
<protein>
    <recommendedName>
        <fullName>Development-specific protein LVN1.2</fullName>
    </recommendedName>
</protein>
<dbReference type="EMBL" id="M27822">
    <property type="protein sequence ID" value="AAA30005.1"/>
    <property type="molecule type" value="mRNA"/>
</dbReference>
<dbReference type="PIR" id="A43739">
    <property type="entry name" value="A43739"/>
</dbReference>
<dbReference type="OrthoDB" id="10070532at2759"/>
<dbReference type="GO" id="GO:0005737">
    <property type="term" value="C:cytoplasm"/>
    <property type="evidence" value="ECO:0000314"/>
    <property type="project" value="UniProtKB"/>
</dbReference>
<dbReference type="GO" id="GO:0005576">
    <property type="term" value="C:extracellular region"/>
    <property type="evidence" value="ECO:0007669"/>
    <property type="project" value="InterPro"/>
</dbReference>
<dbReference type="GO" id="GO:0005764">
    <property type="term" value="C:lysosome"/>
    <property type="evidence" value="ECO:0007669"/>
    <property type="project" value="TreeGrafter"/>
</dbReference>
<dbReference type="GO" id="GO:0005509">
    <property type="term" value="F:calcium ion binding"/>
    <property type="evidence" value="ECO:0007669"/>
    <property type="project" value="InterPro"/>
</dbReference>
<dbReference type="GO" id="GO:0007160">
    <property type="term" value="P:cell-matrix adhesion"/>
    <property type="evidence" value="ECO:0007669"/>
    <property type="project" value="InterPro"/>
</dbReference>
<dbReference type="GO" id="GO:0030317">
    <property type="term" value="P:flagellated sperm motility"/>
    <property type="evidence" value="ECO:0000314"/>
    <property type="project" value="UniProtKB"/>
</dbReference>
<dbReference type="InterPro" id="IPR001299">
    <property type="entry name" value="Ependymin"/>
</dbReference>
<dbReference type="PANTHER" id="PTHR10697">
    <property type="entry name" value="MAMMALIAN EPENDYMIN-RELATED PROTEIN 1"/>
    <property type="match status" value="1"/>
</dbReference>
<dbReference type="PANTHER" id="PTHR10697:SF1">
    <property type="entry name" value="MAMMALIAN EPENDYMIN-RELATED PROTEIN 1"/>
    <property type="match status" value="1"/>
</dbReference>
<feature type="chain" id="PRO_0000084527" description="Development-specific protein LVN1.2">
    <location>
        <begin position="1"/>
        <end position="189"/>
    </location>
</feature>
<keyword id="KW-0217">Developmental protein</keyword>